<keyword id="KW-0066">ATP synthesis</keyword>
<keyword id="KW-0997">Cell inner membrane</keyword>
<keyword id="KW-1003">Cell membrane</keyword>
<keyword id="KW-0139">CF(1)</keyword>
<keyword id="KW-0375">Hydrogen ion transport</keyword>
<keyword id="KW-0406">Ion transport</keyword>
<keyword id="KW-0472">Membrane</keyword>
<keyword id="KW-1185">Reference proteome</keyword>
<keyword id="KW-0813">Transport</keyword>
<sequence>MADKLHFSLVSPARELFSGQVDHVIAPGTEGEFGVLVNHAPFMTTLKNGVVRVLEGDVVRHRFYVRGGFADVTPAGLTILAEEARNLSDASAQEIDVEVEAAKLKLLELDAGDTKRAVLEHQISYLEGLRSALAN</sequence>
<evidence type="ECO:0000255" key="1">
    <source>
        <dbReference type="HAMAP-Rule" id="MF_00530"/>
    </source>
</evidence>
<name>ATPE_HYPNA</name>
<accession>Q0C101</accession>
<proteinExistence type="inferred from homology"/>
<feature type="chain" id="PRO_0000265824" description="ATP synthase epsilon chain">
    <location>
        <begin position="1"/>
        <end position="135"/>
    </location>
</feature>
<dbReference type="EMBL" id="CP000158">
    <property type="protein sequence ID" value="ABI76386.1"/>
    <property type="molecule type" value="Genomic_DNA"/>
</dbReference>
<dbReference type="RefSeq" id="WP_011646892.1">
    <property type="nucleotide sequence ID" value="NC_008358.1"/>
</dbReference>
<dbReference type="SMR" id="Q0C101"/>
<dbReference type="STRING" id="228405.HNE_1891"/>
<dbReference type="KEGG" id="hne:HNE_1891"/>
<dbReference type="eggNOG" id="COG0355">
    <property type="taxonomic scope" value="Bacteria"/>
</dbReference>
<dbReference type="HOGENOM" id="CLU_084338_2_1_5"/>
<dbReference type="Proteomes" id="UP000001959">
    <property type="component" value="Chromosome"/>
</dbReference>
<dbReference type="GO" id="GO:0005886">
    <property type="term" value="C:plasma membrane"/>
    <property type="evidence" value="ECO:0007669"/>
    <property type="project" value="UniProtKB-SubCell"/>
</dbReference>
<dbReference type="GO" id="GO:0045259">
    <property type="term" value="C:proton-transporting ATP synthase complex"/>
    <property type="evidence" value="ECO:0007669"/>
    <property type="project" value="UniProtKB-KW"/>
</dbReference>
<dbReference type="GO" id="GO:0005524">
    <property type="term" value="F:ATP binding"/>
    <property type="evidence" value="ECO:0007669"/>
    <property type="project" value="UniProtKB-UniRule"/>
</dbReference>
<dbReference type="GO" id="GO:0046933">
    <property type="term" value="F:proton-transporting ATP synthase activity, rotational mechanism"/>
    <property type="evidence" value="ECO:0007669"/>
    <property type="project" value="UniProtKB-UniRule"/>
</dbReference>
<dbReference type="CDD" id="cd12152">
    <property type="entry name" value="F1-ATPase_delta"/>
    <property type="match status" value="1"/>
</dbReference>
<dbReference type="Gene3D" id="2.60.15.10">
    <property type="entry name" value="F0F1 ATP synthase delta/epsilon subunit, N-terminal"/>
    <property type="match status" value="1"/>
</dbReference>
<dbReference type="HAMAP" id="MF_00530">
    <property type="entry name" value="ATP_synth_epsil_bac"/>
    <property type="match status" value="1"/>
</dbReference>
<dbReference type="InterPro" id="IPR001469">
    <property type="entry name" value="ATP_synth_F1_dsu/esu"/>
</dbReference>
<dbReference type="InterPro" id="IPR020546">
    <property type="entry name" value="ATP_synth_F1_dsu/esu_N"/>
</dbReference>
<dbReference type="InterPro" id="IPR036771">
    <property type="entry name" value="ATPsynth_dsu/esu_N"/>
</dbReference>
<dbReference type="NCBIfam" id="TIGR01216">
    <property type="entry name" value="ATP_synt_epsi"/>
    <property type="match status" value="1"/>
</dbReference>
<dbReference type="NCBIfam" id="NF001851">
    <property type="entry name" value="PRK00571.2-4"/>
    <property type="match status" value="1"/>
</dbReference>
<dbReference type="NCBIfam" id="NF009983">
    <property type="entry name" value="PRK13449.1"/>
    <property type="match status" value="1"/>
</dbReference>
<dbReference type="PANTHER" id="PTHR13822">
    <property type="entry name" value="ATP SYNTHASE DELTA/EPSILON CHAIN"/>
    <property type="match status" value="1"/>
</dbReference>
<dbReference type="PANTHER" id="PTHR13822:SF10">
    <property type="entry name" value="ATP SYNTHASE EPSILON CHAIN, CHLOROPLASTIC"/>
    <property type="match status" value="1"/>
</dbReference>
<dbReference type="Pfam" id="PF02823">
    <property type="entry name" value="ATP-synt_DE_N"/>
    <property type="match status" value="1"/>
</dbReference>
<dbReference type="SUPFAM" id="SSF51344">
    <property type="entry name" value="Epsilon subunit of F1F0-ATP synthase N-terminal domain"/>
    <property type="match status" value="1"/>
</dbReference>
<protein>
    <recommendedName>
        <fullName evidence="1">ATP synthase epsilon chain</fullName>
    </recommendedName>
    <alternativeName>
        <fullName evidence="1">ATP synthase F1 sector epsilon subunit</fullName>
    </alternativeName>
    <alternativeName>
        <fullName evidence="1">F-ATPase epsilon subunit</fullName>
    </alternativeName>
</protein>
<organism>
    <name type="scientific">Hyphomonas neptunium (strain ATCC 15444)</name>
    <dbReference type="NCBI Taxonomy" id="228405"/>
    <lineage>
        <taxon>Bacteria</taxon>
        <taxon>Pseudomonadati</taxon>
        <taxon>Pseudomonadota</taxon>
        <taxon>Alphaproteobacteria</taxon>
        <taxon>Hyphomonadales</taxon>
        <taxon>Hyphomonadaceae</taxon>
        <taxon>Hyphomonas</taxon>
    </lineage>
</organism>
<gene>
    <name evidence="1" type="primary">atpC</name>
    <name type="ordered locus">HNE_1891</name>
</gene>
<reference key="1">
    <citation type="journal article" date="2006" name="J. Bacteriol.">
        <title>Comparative genomic evidence for a close relationship between the dimorphic prosthecate bacteria Hyphomonas neptunium and Caulobacter crescentus.</title>
        <authorList>
            <person name="Badger J.H."/>
            <person name="Hoover T.R."/>
            <person name="Brun Y.V."/>
            <person name="Weiner R.M."/>
            <person name="Laub M.T."/>
            <person name="Alexandre G."/>
            <person name="Mrazek J."/>
            <person name="Ren Q."/>
            <person name="Paulsen I.T."/>
            <person name="Nelson K.E."/>
            <person name="Khouri H.M."/>
            <person name="Radune D."/>
            <person name="Sosa J."/>
            <person name="Dodson R.J."/>
            <person name="Sullivan S.A."/>
            <person name="Rosovitz M.J."/>
            <person name="Madupu R."/>
            <person name="Brinkac L.M."/>
            <person name="Durkin A.S."/>
            <person name="Daugherty S.C."/>
            <person name="Kothari S.P."/>
            <person name="Giglio M.G."/>
            <person name="Zhou L."/>
            <person name="Haft D.H."/>
            <person name="Selengut J.D."/>
            <person name="Davidsen T.M."/>
            <person name="Yang Q."/>
            <person name="Zafar N."/>
            <person name="Ward N.L."/>
        </authorList>
    </citation>
    <scope>NUCLEOTIDE SEQUENCE [LARGE SCALE GENOMIC DNA]</scope>
    <source>
        <strain>ATCC 15444</strain>
    </source>
</reference>
<comment type="function">
    <text evidence="1">Produces ATP from ADP in the presence of a proton gradient across the membrane.</text>
</comment>
<comment type="subunit">
    <text>F-type ATPases have 2 components, CF(1) - the catalytic core - and CF(0) - the membrane proton channel. CF(1) has five subunits: alpha(3), beta(3), gamma(1), delta(1), epsilon(1). CF(0) has three main subunits: a, b and c.</text>
</comment>
<comment type="subcellular location">
    <subcellularLocation>
        <location evidence="1">Cell inner membrane</location>
        <topology evidence="1">Peripheral membrane protein</topology>
    </subcellularLocation>
</comment>
<comment type="similarity">
    <text evidence="1">Belongs to the ATPase epsilon chain family.</text>
</comment>